<dbReference type="EMBL" id="AC007591">
    <property type="protein sequence ID" value="AAD39650.1"/>
    <property type="status" value="ALT_SEQ"/>
    <property type="molecule type" value="Genomic_DNA"/>
</dbReference>
<dbReference type="EMBL" id="CP002684">
    <property type="protein sequence ID" value="AEE29285.1"/>
    <property type="molecule type" value="Genomic_DNA"/>
</dbReference>
<dbReference type="EMBL" id="BK001006">
    <property type="protein sequence ID" value="DAA00875.1"/>
    <property type="molecule type" value="Genomic_DNA"/>
</dbReference>
<dbReference type="PIR" id="B86286">
    <property type="entry name" value="B86286"/>
</dbReference>
<dbReference type="RefSeq" id="NP_172973.1">
    <property type="nucleotide sequence ID" value="NM_101389.3"/>
</dbReference>
<dbReference type="SMR" id="Q7PC86"/>
<dbReference type="BioGRID" id="23327">
    <property type="interactions" value="4"/>
</dbReference>
<dbReference type="FunCoup" id="Q7PC86">
    <property type="interactions" value="364"/>
</dbReference>
<dbReference type="STRING" id="3702.Q7PC86"/>
<dbReference type="iPTMnet" id="Q7PC86"/>
<dbReference type="PaxDb" id="3702-AT1G15210.1"/>
<dbReference type="ProteomicsDB" id="243271"/>
<dbReference type="EnsemblPlants" id="AT1G15210.1">
    <property type="protein sequence ID" value="AT1G15210.1"/>
    <property type="gene ID" value="AT1G15210"/>
</dbReference>
<dbReference type="GeneID" id="838087"/>
<dbReference type="Gramene" id="AT1G15210.1">
    <property type="protein sequence ID" value="AT1G15210.1"/>
    <property type="gene ID" value="AT1G15210"/>
</dbReference>
<dbReference type="KEGG" id="ath:AT1G15210"/>
<dbReference type="Araport" id="AT1G15210"/>
<dbReference type="TAIR" id="AT1G15210">
    <property type="gene designation" value="ABCG35"/>
</dbReference>
<dbReference type="eggNOG" id="KOG0065">
    <property type="taxonomic scope" value="Eukaryota"/>
</dbReference>
<dbReference type="HOGENOM" id="CLU_000604_35_0_1"/>
<dbReference type="InParanoid" id="Q7PC86"/>
<dbReference type="OMA" id="YHYLVEG"/>
<dbReference type="PhylomeDB" id="Q7PC86"/>
<dbReference type="CD-CODE" id="4299E36E">
    <property type="entry name" value="Nucleolus"/>
</dbReference>
<dbReference type="PRO" id="PR:Q7PC86"/>
<dbReference type="Proteomes" id="UP000006548">
    <property type="component" value="Chromosome 1"/>
</dbReference>
<dbReference type="ExpressionAtlas" id="Q7PC86">
    <property type="expression patterns" value="baseline and differential"/>
</dbReference>
<dbReference type="GO" id="GO:0005886">
    <property type="term" value="C:plasma membrane"/>
    <property type="evidence" value="ECO:0007005"/>
    <property type="project" value="TAIR"/>
</dbReference>
<dbReference type="GO" id="GO:0140359">
    <property type="term" value="F:ABC-type transporter activity"/>
    <property type="evidence" value="ECO:0007669"/>
    <property type="project" value="InterPro"/>
</dbReference>
<dbReference type="GO" id="GO:0005524">
    <property type="term" value="F:ATP binding"/>
    <property type="evidence" value="ECO:0007669"/>
    <property type="project" value="UniProtKB-KW"/>
</dbReference>
<dbReference type="GO" id="GO:0016887">
    <property type="term" value="F:ATP hydrolysis activity"/>
    <property type="evidence" value="ECO:0007669"/>
    <property type="project" value="InterPro"/>
</dbReference>
<dbReference type="GO" id="GO:0003729">
    <property type="term" value="F:mRNA binding"/>
    <property type="evidence" value="ECO:0000314"/>
    <property type="project" value="TAIR"/>
</dbReference>
<dbReference type="CDD" id="cd03233">
    <property type="entry name" value="ABCG_PDR_domain1"/>
    <property type="match status" value="1"/>
</dbReference>
<dbReference type="CDD" id="cd03232">
    <property type="entry name" value="ABCG_PDR_domain2"/>
    <property type="match status" value="1"/>
</dbReference>
<dbReference type="FunFam" id="3.40.50.300:FF:000179">
    <property type="entry name" value="ABC transporter G family member 34"/>
    <property type="match status" value="1"/>
</dbReference>
<dbReference type="FunFam" id="3.40.50.300:FF:000059">
    <property type="entry name" value="ABC transporter G family member 40"/>
    <property type="match status" value="1"/>
</dbReference>
<dbReference type="Gene3D" id="3.40.50.300">
    <property type="entry name" value="P-loop containing nucleotide triphosphate hydrolases"/>
    <property type="match status" value="2"/>
</dbReference>
<dbReference type="InterPro" id="IPR003593">
    <property type="entry name" value="AAA+_ATPase"/>
</dbReference>
<dbReference type="InterPro" id="IPR013525">
    <property type="entry name" value="ABC2_TM"/>
</dbReference>
<dbReference type="InterPro" id="IPR029481">
    <property type="entry name" value="ABC_trans_N"/>
</dbReference>
<dbReference type="InterPro" id="IPR003439">
    <property type="entry name" value="ABC_transporter-like_ATP-bd"/>
</dbReference>
<dbReference type="InterPro" id="IPR043926">
    <property type="entry name" value="ABCG_dom"/>
</dbReference>
<dbReference type="InterPro" id="IPR034001">
    <property type="entry name" value="ABCG_PDR_1"/>
</dbReference>
<dbReference type="InterPro" id="IPR034003">
    <property type="entry name" value="ABCG_PDR_2"/>
</dbReference>
<dbReference type="InterPro" id="IPR027417">
    <property type="entry name" value="P-loop_NTPase"/>
</dbReference>
<dbReference type="InterPro" id="IPR013581">
    <property type="entry name" value="PDR_assoc"/>
</dbReference>
<dbReference type="PANTHER" id="PTHR48040:SF28">
    <property type="entry name" value="ABC TRANSPORTER G FAMILY MEMBER 39-LIKE"/>
    <property type="match status" value="1"/>
</dbReference>
<dbReference type="PANTHER" id="PTHR48040">
    <property type="entry name" value="PLEIOTROPIC DRUG RESISTANCE PROTEIN 1-LIKE ISOFORM X1"/>
    <property type="match status" value="1"/>
</dbReference>
<dbReference type="Pfam" id="PF01061">
    <property type="entry name" value="ABC2_membrane"/>
    <property type="match status" value="2"/>
</dbReference>
<dbReference type="Pfam" id="PF19055">
    <property type="entry name" value="ABC2_membrane_7"/>
    <property type="match status" value="2"/>
</dbReference>
<dbReference type="Pfam" id="PF00005">
    <property type="entry name" value="ABC_tran"/>
    <property type="match status" value="2"/>
</dbReference>
<dbReference type="Pfam" id="PF14510">
    <property type="entry name" value="ABC_trans_N"/>
    <property type="match status" value="1"/>
</dbReference>
<dbReference type="Pfam" id="PF08370">
    <property type="entry name" value="PDR_assoc"/>
    <property type="match status" value="1"/>
</dbReference>
<dbReference type="SMART" id="SM00382">
    <property type="entry name" value="AAA"/>
    <property type="match status" value="2"/>
</dbReference>
<dbReference type="SUPFAM" id="SSF52540">
    <property type="entry name" value="P-loop containing nucleoside triphosphate hydrolases"/>
    <property type="match status" value="3"/>
</dbReference>
<dbReference type="PROSITE" id="PS50893">
    <property type="entry name" value="ABC_TRANSPORTER_2"/>
    <property type="match status" value="2"/>
</dbReference>
<evidence type="ECO:0000250" key="1"/>
<evidence type="ECO:0000255" key="2"/>
<evidence type="ECO:0000255" key="3">
    <source>
        <dbReference type="PROSITE-ProRule" id="PRU00434"/>
    </source>
</evidence>
<evidence type="ECO:0000269" key="4">
    <source>
    </source>
</evidence>
<evidence type="ECO:0000305" key="5"/>
<protein>
    <recommendedName>
        <fullName>ABC transporter G family member 35</fullName>
        <shortName>ABC transporter ABCG.35</shortName>
        <shortName>AtABCG35</shortName>
    </recommendedName>
    <alternativeName>
        <fullName>Pleiotropic drug resistance protein 7</fullName>
    </alternativeName>
</protein>
<organism>
    <name type="scientific">Arabidopsis thaliana</name>
    <name type="common">Mouse-ear cress</name>
    <dbReference type="NCBI Taxonomy" id="3702"/>
    <lineage>
        <taxon>Eukaryota</taxon>
        <taxon>Viridiplantae</taxon>
        <taxon>Streptophyta</taxon>
        <taxon>Embryophyta</taxon>
        <taxon>Tracheophyta</taxon>
        <taxon>Spermatophyta</taxon>
        <taxon>Magnoliopsida</taxon>
        <taxon>eudicotyledons</taxon>
        <taxon>Gunneridae</taxon>
        <taxon>Pentapetalae</taxon>
        <taxon>rosids</taxon>
        <taxon>malvids</taxon>
        <taxon>Brassicales</taxon>
        <taxon>Brassicaceae</taxon>
        <taxon>Camelineae</taxon>
        <taxon>Arabidopsis</taxon>
    </lineage>
</organism>
<accession>Q7PC86</accession>
<accession>Q9XI48</accession>
<proteinExistence type="evidence at transcript level"/>
<comment type="function">
    <text evidence="1">May be a general defense protein.</text>
</comment>
<comment type="subcellular location">
    <subcellularLocation>
        <location evidence="1">Membrane</location>
        <topology evidence="1">Multi-pass membrane protein</topology>
    </subcellularLocation>
</comment>
<comment type="tissue specificity">
    <text evidence="4">Ubiquitous with higher levels in roots.</text>
</comment>
<comment type="induction">
    <text evidence="4">Induced by cycloheximide (CHX) and cold/dark treatment.</text>
</comment>
<comment type="similarity">
    <text evidence="5">Belongs to the ABC transporter superfamily. ABCG family. PDR (TC 3.A.1.205) subfamily.</text>
</comment>
<comment type="sequence caution" evidence="5">
    <conflict type="erroneous gene model prediction">
        <sequence resource="EMBL-CDS" id="AAD39650"/>
    </conflict>
</comment>
<gene>
    <name type="primary">ABCG35</name>
    <name type="synonym">PDR7</name>
    <name type="ordered locus">At1g15210</name>
    <name type="ORF">F9L1.15</name>
</gene>
<sequence>MDYDPAHAMSRGGSMRQTISRSVSKASRNMEDIFNTSSRRTKSVNEDEEALKWASIEKLPTYNRLRTSLMPELGEDDVYGNQILNKAVDVTKLDGEERQKFIDMVFKVAEQDNERILTKLRNRIDRVGIQLPTVEVRYDHLTVKADCYTGDRSLPSLLNAVRNMGEAALGMIGIRLAKKAQLTILKDVSGIVKPSRMTLLLGPPSSGKTTLLLALAGKLDKSLDVSGEVTYNGYRLNEFVPIKTSAYISQNDLHVGIMTVKETLDFSARCQGVGTRYDLLNELARREKDAGIFPEADVDLFMKASAAQGVKSSLITDYTLKILGLDICKDTIVGDDMMRGISGGQKKRVTTGEMIVGPTKTLFMDEISTGLDSSTTFQIVKCLQQIVHLTEATVLISLLQPAPETFDLFDDIILLSEGQIVYQGPRDHILEFFESFGFKCPERKGTADFLQEVTSKKDQEQYWVDPNRPYRYIPVSEFASSFKKFHVGSKLSNELSVPYDKSKSHKAALMFDKYSIKKTELLKSCWDKEWMLMKRNSFFYVFKTVQIIIIAAITSTLYLRTEMHTRNEIDANIYVGSLLFAMIVNMFNGLAEMAMTIQRLPVFYKQRDLLFHPPWTYTLPTFLLGIPISIFESTAWMVVTYYSIGYAPDAERFFKQFLIIFLIQQMAAGIFRFIASTCRTMTIANTGGVLVLLVVFLTGGFLLPRSEIPVWWRWAYWISPLSYAFNAITVNELFAPRWMNKMSGNSTTRLGTSVLNIWDVFDDKNWYWIGVGGLLGFTVIFNGFFTLALTYLDPLGKAQAILPKEEDEEAKGKAGSNKETEMESVSAKKGMVLPFTPLAMSFDDVKYFVDMPAEMREQGVQETRLQLLKGVTSAFRPGVLTALMGVSGAGKTTLMDVLAGRKTGGYIEGDVRVSGFPKKQETFARISGYCEQTDIHSPQVTVRESLIFSAFLRLAKEVSKEDKLMFVDQVMELVELVDLRDAIVGLPGVTGLSTEQRKRLTIAVELVANPSIIFMDEPTSGLDARAAAIVMRAVRNTVDTGRTVVCTIHQPSIDIFEAFDELLLMKRGGHVIYSGPLGRNSHKVVEYFESFPGVPKIPEKYNPATWMLEASSLAAELKLGVDFAELYKASALCQRNKALVQELSVPPQGATDLYFATQFSQNTWGQFKSCLWKQWWTYWRSPDYNLVRFIFTLATSLMIGSVFWQIGGKRSNVQDLTMVIGAIYAAVVFVGINNCSTVQPMVAVERTVFYREKAAGMYSAIPYAISQVTCELPYVLIQTTYYSLIIYSMVGFEWKASKFLWFIFINYFSFLYWTYYGMMTVSLTPNQQVASIFASAFYGIFNLFSGFFIPRPKIPKWWVWYYWICPVAWTIYGLITSQYGDVETPIALLGGAPGLTVKQYIKDQYGFESDYMGPVAGVLVGFTVFFAFIFAFCIKTLNFQSR</sequence>
<reference key="1">
    <citation type="journal article" date="2000" name="Nature">
        <title>Sequence and analysis of chromosome 1 of the plant Arabidopsis thaliana.</title>
        <authorList>
            <person name="Theologis A."/>
            <person name="Ecker J.R."/>
            <person name="Palm C.J."/>
            <person name="Federspiel N.A."/>
            <person name="Kaul S."/>
            <person name="White O."/>
            <person name="Alonso J."/>
            <person name="Altafi H."/>
            <person name="Araujo R."/>
            <person name="Bowman C.L."/>
            <person name="Brooks S.Y."/>
            <person name="Buehler E."/>
            <person name="Chan A."/>
            <person name="Chao Q."/>
            <person name="Chen H."/>
            <person name="Cheuk R.F."/>
            <person name="Chin C.W."/>
            <person name="Chung M.K."/>
            <person name="Conn L."/>
            <person name="Conway A.B."/>
            <person name="Conway A.R."/>
            <person name="Creasy T.H."/>
            <person name="Dewar K."/>
            <person name="Dunn P."/>
            <person name="Etgu P."/>
            <person name="Feldblyum T.V."/>
            <person name="Feng J.-D."/>
            <person name="Fong B."/>
            <person name="Fujii C.Y."/>
            <person name="Gill J.E."/>
            <person name="Goldsmith A.D."/>
            <person name="Haas B."/>
            <person name="Hansen N.F."/>
            <person name="Hughes B."/>
            <person name="Huizar L."/>
            <person name="Hunter J.L."/>
            <person name="Jenkins J."/>
            <person name="Johnson-Hopson C."/>
            <person name="Khan S."/>
            <person name="Khaykin E."/>
            <person name="Kim C.J."/>
            <person name="Koo H.L."/>
            <person name="Kremenetskaia I."/>
            <person name="Kurtz D.B."/>
            <person name="Kwan A."/>
            <person name="Lam B."/>
            <person name="Langin-Hooper S."/>
            <person name="Lee A."/>
            <person name="Lee J.M."/>
            <person name="Lenz C.A."/>
            <person name="Li J.H."/>
            <person name="Li Y.-P."/>
            <person name="Lin X."/>
            <person name="Liu S.X."/>
            <person name="Liu Z.A."/>
            <person name="Luros J.S."/>
            <person name="Maiti R."/>
            <person name="Marziali A."/>
            <person name="Militscher J."/>
            <person name="Miranda M."/>
            <person name="Nguyen M."/>
            <person name="Nierman W.C."/>
            <person name="Osborne B.I."/>
            <person name="Pai G."/>
            <person name="Peterson J."/>
            <person name="Pham P.K."/>
            <person name="Rizzo M."/>
            <person name="Rooney T."/>
            <person name="Rowley D."/>
            <person name="Sakano H."/>
            <person name="Salzberg S.L."/>
            <person name="Schwartz J.R."/>
            <person name="Shinn P."/>
            <person name="Southwick A.M."/>
            <person name="Sun H."/>
            <person name="Tallon L.J."/>
            <person name="Tambunga G."/>
            <person name="Toriumi M.J."/>
            <person name="Town C.D."/>
            <person name="Utterback T."/>
            <person name="Van Aken S."/>
            <person name="Vaysberg M."/>
            <person name="Vysotskaia V.S."/>
            <person name="Walker M."/>
            <person name="Wu D."/>
            <person name="Yu G."/>
            <person name="Fraser C.M."/>
            <person name="Venter J.C."/>
            <person name="Davis R.W."/>
        </authorList>
    </citation>
    <scope>NUCLEOTIDE SEQUENCE [LARGE SCALE GENOMIC DNA]</scope>
    <source>
        <strain>cv. Columbia</strain>
    </source>
</reference>
<reference key="2">
    <citation type="journal article" date="2017" name="Plant J.">
        <title>Araport11: a complete reannotation of the Arabidopsis thaliana reference genome.</title>
        <authorList>
            <person name="Cheng C.Y."/>
            <person name="Krishnakumar V."/>
            <person name="Chan A.P."/>
            <person name="Thibaud-Nissen F."/>
            <person name="Schobel S."/>
            <person name="Town C.D."/>
        </authorList>
    </citation>
    <scope>GENOME REANNOTATION</scope>
    <source>
        <strain>cv. Columbia</strain>
    </source>
</reference>
<reference key="3">
    <citation type="journal article" date="2002" name="Planta">
        <title>The plant PDR family of ABC transporters.</title>
        <authorList>
            <person name="van den Brule S."/>
            <person name="Smart C.C."/>
        </authorList>
    </citation>
    <scope>IDENTIFICATION</scope>
    <scope>TISSUE SPECIFICITY</scope>
    <scope>INDUCTION</scope>
</reference>
<reference key="4">
    <citation type="journal article" date="2006" name="FEBS Lett.">
        <title>Organization and function of the plant pleiotropic drug resistance ABC transporter family.</title>
        <authorList>
            <person name="Crouzet J."/>
            <person name="Trombik T."/>
            <person name="Fraysse A.S."/>
            <person name="Boutry M."/>
        </authorList>
    </citation>
    <scope>GENE FAMILY</scope>
    <scope>NOMENCLATURE</scope>
</reference>
<reference key="5">
    <citation type="journal article" date="2008" name="Trends Plant Sci.">
        <title>Plant ABC proteins - a unified nomenclature and updated inventory.</title>
        <authorList>
            <person name="Verrier P.J."/>
            <person name="Bird D."/>
            <person name="Burla B."/>
            <person name="Dassa E."/>
            <person name="Forestier C."/>
            <person name="Geisler M."/>
            <person name="Klein M."/>
            <person name="Kolukisaoglu H.U."/>
            <person name="Lee Y."/>
            <person name="Martinoia E."/>
            <person name="Murphy A."/>
            <person name="Rea P.A."/>
            <person name="Samuels L."/>
            <person name="Schulz B."/>
            <person name="Spalding E.J."/>
            <person name="Yazaki K."/>
            <person name="Theodoulou F.L."/>
        </authorList>
    </citation>
    <scope>GENE FAMILY</scope>
    <scope>NOMENCLATURE</scope>
</reference>
<name>AB35G_ARATH</name>
<keyword id="KW-0067">ATP-binding</keyword>
<keyword id="KW-0472">Membrane</keyword>
<keyword id="KW-0547">Nucleotide-binding</keyword>
<keyword id="KW-1185">Reference proteome</keyword>
<keyword id="KW-0677">Repeat</keyword>
<keyword id="KW-0812">Transmembrane</keyword>
<keyword id="KW-1133">Transmembrane helix</keyword>
<keyword id="KW-0813">Transport</keyword>
<feature type="chain" id="PRO_0000234634" description="ABC transporter G family member 35">
    <location>
        <begin position="1"/>
        <end position="1442"/>
    </location>
</feature>
<feature type="transmembrane region" description="Helical" evidence="2">
    <location>
        <begin position="538"/>
        <end position="558"/>
    </location>
</feature>
<feature type="transmembrane region" description="Helical" evidence="2">
    <location>
        <begin position="573"/>
        <end position="593"/>
    </location>
</feature>
<feature type="transmembrane region" description="Helical" evidence="2">
    <location>
        <begin position="619"/>
        <end position="639"/>
    </location>
</feature>
<feature type="transmembrane region" description="Helical" evidence="2">
    <location>
        <begin position="657"/>
        <end position="677"/>
    </location>
</feature>
<feature type="transmembrane region" description="Helical" evidence="2">
    <location>
        <begin position="683"/>
        <end position="703"/>
    </location>
</feature>
<feature type="transmembrane region" description="Helical" evidence="2">
    <location>
        <begin position="714"/>
        <end position="734"/>
    </location>
</feature>
<feature type="transmembrane region" description="Helical" evidence="2">
    <location>
        <begin position="769"/>
        <end position="789"/>
    </location>
</feature>
<feature type="transmembrane region" description="Helical" evidence="2">
    <location>
        <begin position="1186"/>
        <end position="1206"/>
    </location>
</feature>
<feature type="transmembrane region" description="Helical" evidence="2">
    <location>
        <begin position="1218"/>
        <end position="1238"/>
    </location>
</feature>
<feature type="transmembrane region" description="Helical" evidence="2">
    <location>
        <begin position="1272"/>
        <end position="1292"/>
    </location>
</feature>
<feature type="transmembrane region" description="Helical" evidence="2">
    <location>
        <begin position="1299"/>
        <end position="1319"/>
    </location>
</feature>
<feature type="transmembrane region" description="Helical" evidence="2">
    <location>
        <begin position="1329"/>
        <end position="1349"/>
    </location>
</feature>
<feature type="transmembrane region" description="Helical" evidence="2">
    <location>
        <begin position="1357"/>
        <end position="1377"/>
    </location>
</feature>
<feature type="transmembrane region" description="Helical" evidence="2">
    <location>
        <begin position="1414"/>
        <end position="1434"/>
    </location>
</feature>
<feature type="domain" description="ABC transporter 1" evidence="3">
    <location>
        <begin position="169"/>
        <end position="442"/>
    </location>
</feature>
<feature type="domain" description="ABC transmembrane type-2 1">
    <location>
        <begin position="520"/>
        <end position="733"/>
    </location>
</feature>
<feature type="domain" description="ABC transporter 2" evidence="3">
    <location>
        <begin position="840"/>
        <end position="1092"/>
    </location>
</feature>
<feature type="domain" description="ABC transmembrane type-2 2">
    <location>
        <begin position="1165"/>
        <end position="1379"/>
    </location>
</feature>
<feature type="binding site" evidence="3">
    <location>
        <begin position="202"/>
        <end position="209"/>
    </location>
    <ligand>
        <name>ATP</name>
        <dbReference type="ChEBI" id="CHEBI:30616"/>
        <label>1</label>
    </ligand>
</feature>
<feature type="binding site" evidence="3">
    <location>
        <begin position="885"/>
        <end position="892"/>
    </location>
    <ligand>
        <name>ATP</name>
        <dbReference type="ChEBI" id="CHEBI:30616"/>
        <label>2</label>
    </ligand>
</feature>